<dbReference type="EMBL" id="FM178379">
    <property type="protein sequence ID" value="CAQ78027.1"/>
    <property type="molecule type" value="Genomic_DNA"/>
</dbReference>
<dbReference type="RefSeq" id="WP_005303517.1">
    <property type="nucleotide sequence ID" value="NC_011312.1"/>
</dbReference>
<dbReference type="SMR" id="B6EPU7"/>
<dbReference type="GeneID" id="93398995"/>
<dbReference type="KEGG" id="vsa:VSAL_I0342"/>
<dbReference type="eggNOG" id="COG0100">
    <property type="taxonomic scope" value="Bacteria"/>
</dbReference>
<dbReference type="HOGENOM" id="CLU_072439_5_0_6"/>
<dbReference type="Proteomes" id="UP000001730">
    <property type="component" value="Chromosome 1"/>
</dbReference>
<dbReference type="GO" id="GO:1990904">
    <property type="term" value="C:ribonucleoprotein complex"/>
    <property type="evidence" value="ECO:0007669"/>
    <property type="project" value="UniProtKB-KW"/>
</dbReference>
<dbReference type="GO" id="GO:0005840">
    <property type="term" value="C:ribosome"/>
    <property type="evidence" value="ECO:0007669"/>
    <property type="project" value="UniProtKB-KW"/>
</dbReference>
<dbReference type="GO" id="GO:0019843">
    <property type="term" value="F:rRNA binding"/>
    <property type="evidence" value="ECO:0007669"/>
    <property type="project" value="UniProtKB-UniRule"/>
</dbReference>
<dbReference type="GO" id="GO:0003735">
    <property type="term" value="F:structural constituent of ribosome"/>
    <property type="evidence" value="ECO:0007669"/>
    <property type="project" value="InterPro"/>
</dbReference>
<dbReference type="GO" id="GO:0006412">
    <property type="term" value="P:translation"/>
    <property type="evidence" value="ECO:0007669"/>
    <property type="project" value="UniProtKB-UniRule"/>
</dbReference>
<dbReference type="FunFam" id="3.30.420.80:FF:000001">
    <property type="entry name" value="30S ribosomal protein S11"/>
    <property type="match status" value="1"/>
</dbReference>
<dbReference type="Gene3D" id="3.30.420.80">
    <property type="entry name" value="Ribosomal protein S11"/>
    <property type="match status" value="1"/>
</dbReference>
<dbReference type="HAMAP" id="MF_01310">
    <property type="entry name" value="Ribosomal_uS11"/>
    <property type="match status" value="1"/>
</dbReference>
<dbReference type="InterPro" id="IPR001971">
    <property type="entry name" value="Ribosomal_uS11"/>
</dbReference>
<dbReference type="InterPro" id="IPR019981">
    <property type="entry name" value="Ribosomal_uS11_bac-type"/>
</dbReference>
<dbReference type="InterPro" id="IPR018102">
    <property type="entry name" value="Ribosomal_uS11_CS"/>
</dbReference>
<dbReference type="InterPro" id="IPR036967">
    <property type="entry name" value="Ribosomal_uS11_sf"/>
</dbReference>
<dbReference type="NCBIfam" id="NF003698">
    <property type="entry name" value="PRK05309.1"/>
    <property type="match status" value="1"/>
</dbReference>
<dbReference type="NCBIfam" id="TIGR03632">
    <property type="entry name" value="uS11_bact"/>
    <property type="match status" value="1"/>
</dbReference>
<dbReference type="PANTHER" id="PTHR11759">
    <property type="entry name" value="40S RIBOSOMAL PROTEIN S14/30S RIBOSOMAL PROTEIN S11"/>
    <property type="match status" value="1"/>
</dbReference>
<dbReference type="Pfam" id="PF00411">
    <property type="entry name" value="Ribosomal_S11"/>
    <property type="match status" value="1"/>
</dbReference>
<dbReference type="PIRSF" id="PIRSF002131">
    <property type="entry name" value="Ribosomal_S11"/>
    <property type="match status" value="1"/>
</dbReference>
<dbReference type="SUPFAM" id="SSF53137">
    <property type="entry name" value="Translational machinery components"/>
    <property type="match status" value="1"/>
</dbReference>
<dbReference type="PROSITE" id="PS00054">
    <property type="entry name" value="RIBOSOMAL_S11"/>
    <property type="match status" value="1"/>
</dbReference>
<keyword id="KW-0687">Ribonucleoprotein</keyword>
<keyword id="KW-0689">Ribosomal protein</keyword>
<keyword id="KW-0694">RNA-binding</keyword>
<keyword id="KW-0699">rRNA-binding</keyword>
<evidence type="ECO:0000255" key="1">
    <source>
        <dbReference type="HAMAP-Rule" id="MF_01310"/>
    </source>
</evidence>
<evidence type="ECO:0000305" key="2"/>
<reference key="1">
    <citation type="journal article" date="2008" name="BMC Genomics">
        <title>The genome sequence of the fish pathogen Aliivibrio salmonicida strain LFI1238 shows extensive evidence of gene decay.</title>
        <authorList>
            <person name="Hjerde E."/>
            <person name="Lorentzen M.S."/>
            <person name="Holden M.T."/>
            <person name="Seeger K."/>
            <person name="Paulsen S."/>
            <person name="Bason N."/>
            <person name="Churcher C."/>
            <person name="Harris D."/>
            <person name="Norbertczak H."/>
            <person name="Quail M.A."/>
            <person name="Sanders S."/>
            <person name="Thurston S."/>
            <person name="Parkhill J."/>
            <person name="Willassen N.P."/>
            <person name="Thomson N.R."/>
        </authorList>
    </citation>
    <scope>NUCLEOTIDE SEQUENCE [LARGE SCALE GENOMIC DNA]</scope>
    <source>
        <strain>LFI1238</strain>
    </source>
</reference>
<sequence length="129" mass="13892">MAKQPTRARKRVRKQVADGVAHIHASFNNTIVTITDRQGNALAWATAGGSGFRGSRKSTPFAAQVAAERCGEMAKEYGVKNLEVMVKGPGPGRESTIRALNAAGYRITNIVDATPIPHNGCRPPKKRRV</sequence>
<feature type="chain" id="PRO_1000141047" description="Small ribosomal subunit protein uS11">
    <location>
        <begin position="1"/>
        <end position="129"/>
    </location>
</feature>
<organism>
    <name type="scientific">Aliivibrio salmonicida (strain LFI1238)</name>
    <name type="common">Vibrio salmonicida (strain LFI1238)</name>
    <dbReference type="NCBI Taxonomy" id="316275"/>
    <lineage>
        <taxon>Bacteria</taxon>
        <taxon>Pseudomonadati</taxon>
        <taxon>Pseudomonadota</taxon>
        <taxon>Gammaproteobacteria</taxon>
        <taxon>Vibrionales</taxon>
        <taxon>Vibrionaceae</taxon>
        <taxon>Aliivibrio</taxon>
    </lineage>
</organism>
<gene>
    <name evidence="1" type="primary">rpsK</name>
    <name type="ordered locus">VSAL_I0342</name>
</gene>
<name>RS11_ALISL</name>
<proteinExistence type="inferred from homology"/>
<comment type="function">
    <text evidence="1">Located on the platform of the 30S subunit, it bridges several disparate RNA helices of the 16S rRNA. Forms part of the Shine-Dalgarno cleft in the 70S ribosome.</text>
</comment>
<comment type="subunit">
    <text evidence="1">Part of the 30S ribosomal subunit. Interacts with proteins S7 and S18. Binds to IF-3.</text>
</comment>
<comment type="similarity">
    <text evidence="1">Belongs to the universal ribosomal protein uS11 family.</text>
</comment>
<accession>B6EPU7</accession>
<protein>
    <recommendedName>
        <fullName evidence="1">Small ribosomal subunit protein uS11</fullName>
    </recommendedName>
    <alternativeName>
        <fullName evidence="2">30S ribosomal protein S11</fullName>
    </alternativeName>
</protein>